<accession>A3P6Z6</accession>
<evidence type="ECO:0000250" key="1"/>
<evidence type="ECO:0000256" key="2">
    <source>
        <dbReference type="SAM" id="MobiDB-lite"/>
    </source>
</evidence>
<evidence type="ECO:0000305" key="3"/>
<proteinExistence type="inferred from homology"/>
<comment type="subcellular location">
    <subcellularLocation>
        <location evidence="1">Secreted</location>
    </subcellularLocation>
    <text evidence="1">Secreted via the bsa type III secretion system.</text>
</comment>
<comment type="similarity">
    <text evidence="3">Belongs to the SctB/SipC family.</text>
</comment>
<comment type="sequence caution" evidence="3">
    <conflict type="erroneous initiation">
        <sequence resource="EMBL-CDS" id="ABN93279"/>
    </conflict>
</comment>
<keyword id="KW-0964">Secreted</keyword>
<keyword id="KW-0843">Virulence</keyword>
<organism>
    <name type="scientific">Burkholderia pseudomallei (strain 1106a)</name>
    <dbReference type="NCBI Taxonomy" id="357348"/>
    <lineage>
        <taxon>Bacteria</taxon>
        <taxon>Pseudomonadati</taxon>
        <taxon>Pseudomonadota</taxon>
        <taxon>Betaproteobacteria</taxon>
        <taxon>Burkholderiales</taxon>
        <taxon>Burkholderiaceae</taxon>
        <taxon>Burkholderia</taxon>
        <taxon>pseudomallei group</taxon>
    </lineage>
</organism>
<name>BIPC_BURP0</name>
<reference key="1">
    <citation type="journal article" date="2010" name="Genome Biol. Evol.">
        <title>Continuing evolution of Burkholderia mallei through genome reduction and large-scale rearrangements.</title>
        <authorList>
            <person name="Losada L."/>
            <person name="Ronning C.M."/>
            <person name="DeShazer D."/>
            <person name="Woods D."/>
            <person name="Fedorova N."/>
            <person name="Kim H.S."/>
            <person name="Shabalina S.A."/>
            <person name="Pearson T.R."/>
            <person name="Brinkac L."/>
            <person name="Tan P."/>
            <person name="Nandi T."/>
            <person name="Crabtree J."/>
            <person name="Badger J."/>
            <person name="Beckstrom-Sternberg S."/>
            <person name="Saqib M."/>
            <person name="Schutzer S.E."/>
            <person name="Keim P."/>
            <person name="Nierman W.C."/>
        </authorList>
    </citation>
    <scope>NUCLEOTIDE SEQUENCE [LARGE SCALE GENOMIC DNA]</scope>
    <source>
        <strain>1106a</strain>
    </source>
</reference>
<gene>
    <name type="primary">bipC</name>
    <name type="ordered locus">BURPS1106A_A2073</name>
</gene>
<dbReference type="EMBL" id="CP000573">
    <property type="protein sequence ID" value="ABN93279.1"/>
    <property type="status" value="ALT_INIT"/>
    <property type="molecule type" value="Genomic_DNA"/>
</dbReference>
<dbReference type="RefSeq" id="WP_004551891.1">
    <property type="nucleotide sequence ID" value="NC_009078.1"/>
</dbReference>
<dbReference type="KEGG" id="bpl:BURPS1106A_A2073"/>
<dbReference type="HOGENOM" id="CLU_661703_0_0_4"/>
<dbReference type="PHI-base" id="PHI:6552"/>
<dbReference type="Proteomes" id="UP000006738">
    <property type="component" value="Chromosome II"/>
</dbReference>
<dbReference type="GO" id="GO:0005576">
    <property type="term" value="C:extracellular region"/>
    <property type="evidence" value="ECO:0007669"/>
    <property type="project" value="UniProtKB-SubCell"/>
</dbReference>
<dbReference type="InterPro" id="IPR005427">
    <property type="entry name" value="BipC/SctB"/>
</dbReference>
<dbReference type="NCBIfam" id="TIGR02101">
    <property type="entry name" value="IpaC_SipC"/>
    <property type="match status" value="1"/>
</dbReference>
<dbReference type="Pfam" id="PF09599">
    <property type="entry name" value="IpaC_SipC"/>
    <property type="match status" value="1"/>
</dbReference>
<dbReference type="PRINTS" id="PR01608">
    <property type="entry name" value="BACINVASINC"/>
</dbReference>
<sequence length="419" mass="44250">MSIGVQSSGINISHAGLSRLVDAGKSEQGDKAVRDDGRALARADAALAAVVGERVAARRDAVAGSGAQRVELARPKPDAQTRATDRRTVSGLEREHKRLAASQTPRVTGMHDALVQRHVSLDGAKAAHGEGVKRAAGDAPRAAADAPQRFAFADDKAFDAMLALGAAMQKNVQSDLAMQGKLTMLAHDAMMSAAAQDRSIGAAQMTAAIAGGALQATTSLGGAMQQMKSLSTKSMSIEKELKPQAELKQFHAEQALELRGINKPVLSNDEVSHVKIKRDTGETVRHEIDHGGERMSDEHASVLAQEAPARQHRIDMHGMRHEENLVKAGRQQMKGDLLQSGGQIGKNQIDGASAQQQGADRAEQKEDENAQQTAMAAASTRDEAAHRSREAAQKAIDAAKSQVANDNAVAAQVAGNLRT</sequence>
<feature type="chain" id="PRO_0000343998" description="Effector protein BipC">
    <location>
        <begin position="1"/>
        <end position="419"/>
    </location>
</feature>
<feature type="region of interest" description="Disordered" evidence="2">
    <location>
        <begin position="62"/>
        <end position="91"/>
    </location>
</feature>
<feature type="region of interest" description="Disordered" evidence="2">
    <location>
        <begin position="338"/>
        <end position="402"/>
    </location>
</feature>
<feature type="compositionally biased region" description="Basic and acidic residues" evidence="2">
    <location>
        <begin position="71"/>
        <end position="91"/>
    </location>
</feature>
<feature type="compositionally biased region" description="Basic and acidic residues" evidence="2">
    <location>
        <begin position="380"/>
        <end position="392"/>
    </location>
</feature>
<protein>
    <recommendedName>
        <fullName>Effector protein BipC</fullName>
    </recommendedName>
</protein>